<evidence type="ECO:0000250" key="1">
    <source>
        <dbReference type="UniProtKB" id="G1FNI6"/>
    </source>
</evidence>
<evidence type="ECO:0000250" key="2">
    <source>
        <dbReference type="UniProtKB" id="Q8RY71"/>
    </source>
</evidence>
<evidence type="ECO:0000250" key="3">
    <source>
        <dbReference type="UniProtKB" id="Q9SDM9"/>
    </source>
</evidence>
<evidence type="ECO:0000255" key="4"/>
<evidence type="ECO:0000255" key="5">
    <source>
        <dbReference type="PROSITE-ProRule" id="PRU01088"/>
    </source>
</evidence>
<evidence type="ECO:0000269" key="6">
    <source>
    </source>
</evidence>
<evidence type="ECO:0000269" key="7">
    <source>
    </source>
</evidence>
<evidence type="ECO:0000269" key="8">
    <source>
    </source>
</evidence>
<evidence type="ECO:0000303" key="9">
    <source>
    </source>
</evidence>
<evidence type="ECO:0000303" key="10">
    <source>
    </source>
</evidence>
<evidence type="ECO:0000305" key="11"/>
<evidence type="ECO:0000312" key="12">
    <source>
        <dbReference type="Araport" id="AT3G16410"/>
    </source>
</evidence>
<evidence type="ECO:0000312" key="13">
    <source>
        <dbReference type="EMBL" id="AAB63637.1"/>
    </source>
</evidence>
<evidence type="ECO:0000312" key="14">
    <source>
        <dbReference type="EMBL" id="BAB01139.1"/>
    </source>
</evidence>
<organism>
    <name type="scientific">Arabidopsis thaliana</name>
    <name type="common">Mouse-ear cress</name>
    <dbReference type="NCBI Taxonomy" id="3702"/>
    <lineage>
        <taxon>Eukaryota</taxon>
        <taxon>Viridiplantae</taxon>
        <taxon>Streptophyta</taxon>
        <taxon>Embryophyta</taxon>
        <taxon>Tracheophyta</taxon>
        <taxon>Spermatophyta</taxon>
        <taxon>Magnoliopsida</taxon>
        <taxon>eudicotyledons</taxon>
        <taxon>Gunneridae</taxon>
        <taxon>Pentapetalae</taxon>
        <taxon>rosids</taxon>
        <taxon>malvids</taxon>
        <taxon>Brassicales</taxon>
        <taxon>Brassicaceae</taxon>
        <taxon>Camelineae</taxon>
        <taxon>Arabidopsis</taxon>
    </lineage>
</organism>
<proteinExistence type="evidence at protein level"/>
<keyword id="KW-0408">Iron</keyword>
<keyword id="KW-0880">Kelch repeat</keyword>
<keyword id="KW-0430">Lectin</keyword>
<keyword id="KW-0456">Lyase</keyword>
<keyword id="KW-0479">Metal-binding</keyword>
<keyword id="KW-1185">Reference proteome</keyword>
<keyword id="KW-0677">Repeat</keyword>
<sequence length="619" mass="67604">MAQKVEAQGGNGGNQWDDGSEYDAVTKIQVAAGGNGIEYVKFTYVKNGQTEEAPLRGVKGRSFEADPFVINHPEEHLVSVEGRYNPEGLILGLTFKSNKKTSDLIGYEDGTPFTLQVQDKKIVGFYGFAGNNLHSLGAYFAPLTNVTPLNAKKLEAKGGDTGDIWDDGVYDNVRKVYVGQAQYGIAFVKFEYVNGSQVVVGDEHGKKTELGVEEFEIDADDYIVYVEGYREKVNGMTSEMITFLSFKTYKGKTSQPIEQRPGIKFVLQGGKIVGFHGRSTDVLDSLGAYISLSPTPNLHGKWTKVDENGDGPGLRCSHDIAQVGNKIYSFGGEFTPNQPIDKHLYVFDIESRTWSISPATGDIPTLSCLGVCMVSIGSTLYVFGGRDASRQYNGFYSFDTTTNEWKLLTPVEEGPTPRSFHSMAADEENVYVFGGVSATARLNTLDSYNIVDKKWFHCSTPGDSLTARGGAGLEVVQGKVWVVYGFNGCEVDDVHYYDPVQDKWTQVETFGVRPSERSVFASAALGKHIVIFGGEIAMDPLAHVGPGQLTDGTFALDTETLQWERLDKFGGEEETPSSRGWTASTTATIGGKKGLVMHGGKAPTNDRFDDLFFYGIDSA</sequence>
<dbReference type="EC" id="4.8.1.5" evidence="6"/>
<dbReference type="EMBL" id="AC001645">
    <property type="protein sequence ID" value="AAB63637.1"/>
    <property type="molecule type" value="Genomic_DNA"/>
</dbReference>
<dbReference type="EMBL" id="AP000373">
    <property type="protein sequence ID" value="BAB01139.1"/>
    <property type="molecule type" value="Genomic_DNA"/>
</dbReference>
<dbReference type="EMBL" id="CP002686">
    <property type="protein sequence ID" value="AEE75809.1"/>
    <property type="molecule type" value="Genomic_DNA"/>
</dbReference>
<dbReference type="EMBL" id="BT023445">
    <property type="protein sequence ID" value="AAY56436.1"/>
    <property type="molecule type" value="mRNA"/>
</dbReference>
<dbReference type="EMBL" id="AK228139">
    <property type="protein sequence ID" value="BAF00096.1"/>
    <property type="molecule type" value="mRNA"/>
</dbReference>
<dbReference type="RefSeq" id="NP_188262.1">
    <property type="nucleotide sequence ID" value="NM_112512.5"/>
</dbReference>
<dbReference type="SMR" id="O04316"/>
<dbReference type="BioGRID" id="6222">
    <property type="interactions" value="2"/>
</dbReference>
<dbReference type="FunCoup" id="O04316">
    <property type="interactions" value="69"/>
</dbReference>
<dbReference type="STRING" id="3702.O04316"/>
<dbReference type="GlyGen" id="O04316">
    <property type="glycosylation" value="1 site"/>
</dbReference>
<dbReference type="PaxDb" id="3702-AT3G16410.1"/>
<dbReference type="ProteomicsDB" id="250658"/>
<dbReference type="EnsemblPlants" id="AT3G16410.1">
    <property type="protein sequence ID" value="AT3G16410.1"/>
    <property type="gene ID" value="AT3G16410"/>
</dbReference>
<dbReference type="GeneID" id="820888"/>
<dbReference type="Gramene" id="AT3G16410.1">
    <property type="protein sequence ID" value="AT3G16410.1"/>
    <property type="gene ID" value="AT3G16410"/>
</dbReference>
<dbReference type="KEGG" id="ath:AT3G16410"/>
<dbReference type="Araport" id="AT3G16410"/>
<dbReference type="TAIR" id="AT3G16410">
    <property type="gene designation" value="NSP4"/>
</dbReference>
<dbReference type="eggNOG" id="KOG0379">
    <property type="taxonomic scope" value="Eukaryota"/>
</dbReference>
<dbReference type="HOGENOM" id="CLU_030461_2_0_1"/>
<dbReference type="InParanoid" id="O04316"/>
<dbReference type="OMA" id="VNGMTSE"/>
<dbReference type="PhylomeDB" id="O04316"/>
<dbReference type="PRO" id="PR:O04316"/>
<dbReference type="Proteomes" id="UP000006548">
    <property type="component" value="Chromosome 3"/>
</dbReference>
<dbReference type="ExpressionAtlas" id="O04316">
    <property type="expression patterns" value="baseline and differential"/>
</dbReference>
<dbReference type="GO" id="GO:0005829">
    <property type="term" value="C:cytosol"/>
    <property type="evidence" value="ECO:0007005"/>
    <property type="project" value="TAIR"/>
</dbReference>
<dbReference type="GO" id="GO:0009506">
    <property type="term" value="C:plasmodesma"/>
    <property type="evidence" value="ECO:0007005"/>
    <property type="project" value="TAIR"/>
</dbReference>
<dbReference type="GO" id="GO:0030246">
    <property type="term" value="F:carbohydrate binding"/>
    <property type="evidence" value="ECO:0007669"/>
    <property type="project" value="UniProtKB-KW"/>
</dbReference>
<dbReference type="GO" id="GO:0016829">
    <property type="term" value="F:lyase activity"/>
    <property type="evidence" value="ECO:0007669"/>
    <property type="project" value="UniProtKB-KW"/>
</dbReference>
<dbReference type="GO" id="GO:0046872">
    <property type="term" value="F:metal ion binding"/>
    <property type="evidence" value="ECO:0007669"/>
    <property type="project" value="UniProtKB-KW"/>
</dbReference>
<dbReference type="GO" id="GO:0019762">
    <property type="term" value="P:glucosinolate catabolic process"/>
    <property type="evidence" value="ECO:0000314"/>
    <property type="project" value="TAIR"/>
</dbReference>
<dbReference type="GO" id="GO:0080028">
    <property type="term" value="P:nitrile biosynthetic process"/>
    <property type="evidence" value="ECO:0000314"/>
    <property type="project" value="TAIR"/>
</dbReference>
<dbReference type="GO" id="GO:0009845">
    <property type="term" value="P:seed germination"/>
    <property type="evidence" value="ECO:0000270"/>
    <property type="project" value="UniProtKB"/>
</dbReference>
<dbReference type="CDD" id="cd09612">
    <property type="entry name" value="Jacalin"/>
    <property type="match status" value="2"/>
</dbReference>
<dbReference type="FunFam" id="2.100.10.30:FF:000001">
    <property type="entry name" value="Jacalin-related lectin 33"/>
    <property type="match status" value="2"/>
</dbReference>
<dbReference type="FunFam" id="2.120.10.80:FF:000175">
    <property type="entry name" value="Nitrile-specifier protein 2"/>
    <property type="match status" value="1"/>
</dbReference>
<dbReference type="Gene3D" id="2.100.10.30">
    <property type="entry name" value="Jacalin-like lectin domain"/>
    <property type="match status" value="2"/>
</dbReference>
<dbReference type="Gene3D" id="2.120.10.80">
    <property type="entry name" value="Kelch-type beta propeller"/>
    <property type="match status" value="1"/>
</dbReference>
<dbReference type="InterPro" id="IPR001229">
    <property type="entry name" value="Jacalin-like_lectin_dom"/>
</dbReference>
<dbReference type="InterPro" id="IPR033734">
    <property type="entry name" value="Jacalin-like_lectin_dom_plant"/>
</dbReference>
<dbReference type="InterPro" id="IPR036404">
    <property type="entry name" value="Jacalin-like_lectin_dom_sf"/>
</dbReference>
<dbReference type="InterPro" id="IPR015915">
    <property type="entry name" value="Kelch-typ_b-propeller"/>
</dbReference>
<dbReference type="InterPro" id="IPR006652">
    <property type="entry name" value="Kelch_1"/>
</dbReference>
<dbReference type="PANTHER" id="PTHR47435">
    <property type="entry name" value="KELCH REPEAT PROTEIN (AFU_ORTHOLOGUE AFUA_5G12780)"/>
    <property type="match status" value="1"/>
</dbReference>
<dbReference type="PANTHER" id="PTHR47435:SF5">
    <property type="entry name" value="NITRILE-SPECIFIER PROTEIN 1-RELATED"/>
    <property type="match status" value="1"/>
</dbReference>
<dbReference type="Pfam" id="PF01419">
    <property type="entry name" value="Jacalin"/>
    <property type="match status" value="2"/>
</dbReference>
<dbReference type="Pfam" id="PF24681">
    <property type="entry name" value="Kelch_KLHDC2_KLHL20_DRC7"/>
    <property type="match status" value="1"/>
</dbReference>
<dbReference type="SMART" id="SM00915">
    <property type="entry name" value="Jacalin"/>
    <property type="match status" value="2"/>
</dbReference>
<dbReference type="SMART" id="SM00612">
    <property type="entry name" value="Kelch"/>
    <property type="match status" value="3"/>
</dbReference>
<dbReference type="SUPFAM" id="SSF117281">
    <property type="entry name" value="Kelch motif"/>
    <property type="match status" value="1"/>
</dbReference>
<dbReference type="SUPFAM" id="SSF51101">
    <property type="entry name" value="Mannose-binding lectins"/>
    <property type="match status" value="2"/>
</dbReference>
<dbReference type="PROSITE" id="PS51752">
    <property type="entry name" value="JACALIN_LECTIN"/>
    <property type="match status" value="2"/>
</dbReference>
<accession>O04316</accession>
<feature type="chain" id="PRO_0000363145" description="Thiohydroximate-O-sulfate sulfur/sulfate-lyase (nitrile-forming) NSP4">
    <location>
        <begin position="1"/>
        <end position="619"/>
    </location>
</feature>
<feature type="domain" description="Jacalin-type lectin 1" evidence="5">
    <location>
        <begin position="2"/>
        <end position="142"/>
    </location>
</feature>
<feature type="domain" description="Jacalin-type lectin 2" evidence="5">
    <location>
        <begin position="151"/>
        <end position="292"/>
    </location>
</feature>
<feature type="repeat" description="Kelch 1" evidence="4">
    <location>
        <begin position="326"/>
        <end position="374"/>
    </location>
</feature>
<feature type="repeat" description="Kelch 2" evidence="4">
    <location>
        <begin position="379"/>
        <end position="425"/>
    </location>
</feature>
<feature type="repeat" description="Kelch 3" evidence="4">
    <location>
        <begin position="429"/>
        <end position="478"/>
    </location>
</feature>
<feature type="repeat" description="Kelch 4" evidence="4">
    <location>
        <begin position="480"/>
        <end position="524"/>
    </location>
</feature>
<feature type="repeat" description="Kelch 5" evidence="4">
    <location>
        <begin position="528"/>
        <end position="583"/>
    </location>
</feature>
<feature type="active site" description="Proton donor" evidence="3">
    <location>
        <position position="386"/>
    </location>
</feature>
<feature type="active site" description="Proton donor" evidence="3">
    <location>
        <position position="441"/>
    </location>
</feature>
<feature type="binding site" evidence="3">
    <location>
        <position position="386"/>
    </location>
    <ligand>
        <name>a (Z)-N-(sulfonatooxy)alkanimidothioate</name>
        <dbReference type="ChEBI" id="CHEBI:183089"/>
    </ligand>
    <ligandPart>
        <name>sulfur</name>
        <dbReference type="ChEBI" id="CHEBI:26833"/>
    </ligandPart>
</feature>
<feature type="binding site" evidence="3">
    <location>
        <position position="419"/>
    </location>
    <ligand>
        <name>a (Z)-N-(sulfonatooxy)alkanimidothioate</name>
        <dbReference type="ChEBI" id="CHEBI:183089"/>
    </ligand>
</feature>
<feature type="binding site" evidence="3">
    <location>
        <position position="441"/>
    </location>
    <ligand>
        <name>a (Z)-N-(sulfonatooxy)alkanimidothioate</name>
        <dbReference type="ChEBI" id="CHEBI:183089"/>
    </ligand>
    <ligandPart>
        <name>sulfur</name>
        <dbReference type="ChEBI" id="CHEBI:26833"/>
    </ligandPart>
</feature>
<feature type="binding site" evidence="3">
    <location>
        <position position="470"/>
    </location>
    <ligand>
        <name>a (Z)-N-(sulfonatooxy)alkanimidothioate</name>
        <dbReference type="ChEBI" id="CHEBI:183089"/>
    </ligand>
</feature>
<feature type="binding site" evidence="3">
    <location>
        <position position="519"/>
    </location>
    <ligand>
        <name>a (Z)-N-(sulfonatooxy)alkanimidothioate</name>
        <dbReference type="ChEBI" id="CHEBI:183089"/>
    </ligand>
</feature>
<feature type="binding site" evidence="3">
    <location>
        <position position="535"/>
    </location>
    <ligand>
        <name>Fe(2+)</name>
        <dbReference type="ChEBI" id="CHEBI:29033"/>
    </ligand>
</feature>
<feature type="binding site" evidence="3">
    <location>
        <position position="539"/>
    </location>
    <ligand>
        <name>Fe(2+)</name>
        <dbReference type="ChEBI" id="CHEBI:29033"/>
    </ligand>
</feature>
<feature type="binding site" evidence="3">
    <location>
        <position position="543"/>
    </location>
    <ligand>
        <name>Fe(2+)</name>
        <dbReference type="ChEBI" id="CHEBI:29033"/>
    </ligand>
</feature>
<feature type="binding site" evidence="3">
    <location>
        <position position="581"/>
    </location>
    <ligand>
        <name>a (Z)-N-(sulfonatooxy)alkanimidothioate</name>
        <dbReference type="ChEBI" id="CHEBI:183089"/>
    </ligand>
</feature>
<protein>
    <recommendedName>
        <fullName evidence="11">Thiohydroximate-O-sulfate sulfur/sulfate-lyase (nitrile-forming) NSP4</fullName>
        <ecNumber evidence="6">4.8.1.5</ecNumber>
    </recommendedName>
    <alternativeName>
        <fullName evidence="9">Jacalin-related lectin 29</fullName>
    </alternativeName>
    <alternativeName>
        <fullName evidence="10">Nitrile-specifier protein 4</fullName>
        <shortName evidence="10">AtNSP4</shortName>
    </alternativeName>
</protein>
<comment type="function">
    <text evidence="6 7">Specifier protein that contributes to constitutive and herbivore-induced simple nitrile formation (PubMed:27990154). Promotes simple nitriles, but not epithionitrile or thiocyanate formation (PubMed:18987211). Converts allylglucosinolate and benzylglucosinolate (glucotropaeolin) to their corresponding simple nitriles in the presence of myrosinase (PubMed:18987211).</text>
</comment>
<comment type="catalytic activity">
    <reaction evidence="6">
        <text>a (Z)-N-(sulfonatooxy)alkanimidothioate = a nitrile + sulfur + sulfate</text>
        <dbReference type="Rhea" id="RHEA:59956"/>
        <dbReference type="ChEBI" id="CHEBI:16189"/>
        <dbReference type="ChEBI" id="CHEBI:18379"/>
        <dbReference type="ChEBI" id="CHEBI:26833"/>
        <dbReference type="ChEBI" id="CHEBI:183089"/>
        <dbReference type="EC" id="4.8.1.5"/>
    </reaction>
</comment>
<comment type="catalytic activity">
    <reaction evidence="6">
        <text>(Z)-phenyl-N-(sulfonatooxy)methanimidothioate = phenylacetonitrile + sulfur + sulfate</text>
        <dbReference type="Rhea" id="RHEA:69308"/>
        <dbReference type="ChEBI" id="CHEBI:16189"/>
        <dbReference type="ChEBI" id="CHEBI:25979"/>
        <dbReference type="ChEBI" id="CHEBI:26833"/>
        <dbReference type="ChEBI" id="CHEBI:183061"/>
    </reaction>
</comment>
<comment type="catalytic activity">
    <reaction evidence="6">
        <text>(Z)-N-(sulfonatooxy)prop-2-enimidothioate = but-3-enenitrile + sulfur + sulfate</text>
        <dbReference type="Rhea" id="RHEA:69276"/>
        <dbReference type="ChEBI" id="CHEBI:16189"/>
        <dbReference type="ChEBI" id="CHEBI:26833"/>
        <dbReference type="ChEBI" id="CHEBI:183062"/>
        <dbReference type="ChEBI" id="CHEBI:183063"/>
    </reaction>
</comment>
<comment type="cofactor">
    <cofactor evidence="2">
        <name>Fe(2+)</name>
        <dbReference type="ChEBI" id="CHEBI:29033"/>
    </cofactor>
</comment>
<comment type="tissue specificity">
    <text evidence="7 8">Mainly expressed in roots, and, to a lower extent, in seedlings and leaves (PubMed:27990154). Observed in seeds (PubMed:31850033).</text>
</comment>
<comment type="developmental stage">
    <text evidence="8">In seeds, present constitutively throughout embryogenesis and during stratification at low levels (PubMed:31850033). Accumulates progressively after seed germination and in young seedlings (PubMed:31850033).</text>
</comment>
<comment type="disruption phenotype">
    <text evidence="6">No visible phenotype.</text>
</comment>
<comment type="miscellaneous">
    <text evidence="1">The proton donor differs depending on substrates.</text>
</comment>
<comment type="miscellaneous">
    <text>Contains a second mannose-binding lectin domain not present in other members of the family.</text>
</comment>
<comment type="similarity">
    <text evidence="5 11">Belongs to the jacalin lectin family.</text>
</comment>
<gene>
    <name evidence="10" type="primary">NSP4</name>
    <name evidence="9" type="synonym">JAL29</name>
    <name evidence="12" type="ordered locus">At3g16410</name>
    <name evidence="14" type="ORF">MDC8.3</name>
    <name evidence="13" type="ORF">T02O04.10</name>
    <name type="ORF">T2O4.17</name>
</gene>
<name>JAL29_ARATH</name>
<reference key="1">
    <citation type="journal article" date="2000" name="Nature">
        <title>Sequence and analysis of chromosome 3 of the plant Arabidopsis thaliana.</title>
        <authorList>
            <person name="Salanoubat M."/>
            <person name="Lemcke K."/>
            <person name="Rieger M."/>
            <person name="Ansorge W."/>
            <person name="Unseld M."/>
            <person name="Fartmann B."/>
            <person name="Valle G."/>
            <person name="Bloecker H."/>
            <person name="Perez-Alonso M."/>
            <person name="Obermaier B."/>
            <person name="Delseny M."/>
            <person name="Boutry M."/>
            <person name="Grivell L.A."/>
            <person name="Mache R."/>
            <person name="Puigdomenech P."/>
            <person name="De Simone V."/>
            <person name="Choisne N."/>
            <person name="Artiguenave F."/>
            <person name="Robert C."/>
            <person name="Brottier P."/>
            <person name="Wincker P."/>
            <person name="Cattolico L."/>
            <person name="Weissenbach J."/>
            <person name="Saurin W."/>
            <person name="Quetier F."/>
            <person name="Schaefer M."/>
            <person name="Mueller-Auer S."/>
            <person name="Gabel C."/>
            <person name="Fuchs M."/>
            <person name="Benes V."/>
            <person name="Wurmbach E."/>
            <person name="Drzonek H."/>
            <person name="Erfle H."/>
            <person name="Jordan N."/>
            <person name="Bangert S."/>
            <person name="Wiedelmann R."/>
            <person name="Kranz H."/>
            <person name="Voss H."/>
            <person name="Holland R."/>
            <person name="Brandt P."/>
            <person name="Nyakatura G."/>
            <person name="Vezzi A."/>
            <person name="D'Angelo M."/>
            <person name="Pallavicini A."/>
            <person name="Toppo S."/>
            <person name="Simionati B."/>
            <person name="Conrad A."/>
            <person name="Hornischer K."/>
            <person name="Kauer G."/>
            <person name="Loehnert T.-H."/>
            <person name="Nordsiek G."/>
            <person name="Reichelt J."/>
            <person name="Scharfe M."/>
            <person name="Schoen O."/>
            <person name="Bargues M."/>
            <person name="Terol J."/>
            <person name="Climent J."/>
            <person name="Navarro P."/>
            <person name="Collado C."/>
            <person name="Perez-Perez A."/>
            <person name="Ottenwaelder B."/>
            <person name="Duchemin D."/>
            <person name="Cooke R."/>
            <person name="Laudie M."/>
            <person name="Berger-Llauro C."/>
            <person name="Purnelle B."/>
            <person name="Masuy D."/>
            <person name="de Haan M."/>
            <person name="Maarse A.C."/>
            <person name="Alcaraz J.-P."/>
            <person name="Cottet A."/>
            <person name="Casacuberta E."/>
            <person name="Monfort A."/>
            <person name="Argiriou A."/>
            <person name="Flores M."/>
            <person name="Liguori R."/>
            <person name="Vitale D."/>
            <person name="Mannhaupt G."/>
            <person name="Haase D."/>
            <person name="Schoof H."/>
            <person name="Rudd S."/>
            <person name="Zaccaria P."/>
            <person name="Mewes H.-W."/>
            <person name="Mayer K.F.X."/>
            <person name="Kaul S."/>
            <person name="Town C.D."/>
            <person name="Koo H.L."/>
            <person name="Tallon L.J."/>
            <person name="Jenkins J."/>
            <person name="Rooney T."/>
            <person name="Rizzo M."/>
            <person name="Walts A."/>
            <person name="Utterback T."/>
            <person name="Fujii C.Y."/>
            <person name="Shea T.P."/>
            <person name="Creasy T.H."/>
            <person name="Haas B."/>
            <person name="Maiti R."/>
            <person name="Wu D."/>
            <person name="Peterson J."/>
            <person name="Van Aken S."/>
            <person name="Pai G."/>
            <person name="Militscher J."/>
            <person name="Sellers P."/>
            <person name="Gill J.E."/>
            <person name="Feldblyum T.V."/>
            <person name="Preuss D."/>
            <person name="Lin X."/>
            <person name="Nierman W.C."/>
            <person name="Salzberg S.L."/>
            <person name="White O."/>
            <person name="Venter J.C."/>
            <person name="Fraser C.M."/>
            <person name="Kaneko T."/>
            <person name="Nakamura Y."/>
            <person name="Sato S."/>
            <person name="Kato T."/>
            <person name="Asamizu E."/>
            <person name="Sasamoto S."/>
            <person name="Kimura T."/>
            <person name="Idesawa K."/>
            <person name="Kawashima K."/>
            <person name="Kishida Y."/>
            <person name="Kiyokawa C."/>
            <person name="Kohara M."/>
            <person name="Matsumoto M."/>
            <person name="Matsuno A."/>
            <person name="Muraki A."/>
            <person name="Nakayama S."/>
            <person name="Nakazaki N."/>
            <person name="Shinpo S."/>
            <person name="Takeuchi C."/>
            <person name="Wada T."/>
            <person name="Watanabe A."/>
            <person name="Yamada M."/>
            <person name="Yasuda M."/>
            <person name="Tabata S."/>
        </authorList>
    </citation>
    <scope>NUCLEOTIDE SEQUENCE [LARGE SCALE GENOMIC DNA]</scope>
    <source>
        <strain>cv. Columbia</strain>
    </source>
</reference>
<reference key="2">
    <citation type="journal article" date="2000" name="DNA Res.">
        <title>Structural analysis of Arabidopsis thaliana chromosome 3. II. Sequence features of the 4,251,695 bp regions covered by 90 P1, TAC and BAC clones.</title>
        <authorList>
            <person name="Kaneko T."/>
            <person name="Katoh T."/>
            <person name="Sato S."/>
            <person name="Nakamura Y."/>
            <person name="Asamizu E."/>
            <person name="Tabata S."/>
        </authorList>
    </citation>
    <scope>NUCLEOTIDE SEQUENCE [LARGE SCALE GENOMIC DNA]</scope>
    <source>
        <strain>cv. Columbia</strain>
    </source>
</reference>
<reference key="3">
    <citation type="journal article" date="2017" name="Plant J.">
        <title>Araport11: a complete reannotation of the Arabidopsis thaliana reference genome.</title>
        <authorList>
            <person name="Cheng C.Y."/>
            <person name="Krishnakumar V."/>
            <person name="Chan A.P."/>
            <person name="Thibaud-Nissen F."/>
            <person name="Schobel S."/>
            <person name="Town C.D."/>
        </authorList>
    </citation>
    <scope>GENOME REANNOTATION</scope>
    <source>
        <strain>cv. Columbia</strain>
    </source>
</reference>
<reference key="4">
    <citation type="submission" date="2005-05" db="EMBL/GenBank/DDBJ databases">
        <title>Arabidopsis ORF clones.</title>
        <authorList>
            <person name="Cheuk R.F."/>
            <person name="Chen H."/>
            <person name="Kim C.J."/>
            <person name="Shinn P."/>
            <person name="Ecker J.R."/>
        </authorList>
    </citation>
    <scope>NUCLEOTIDE SEQUENCE [LARGE SCALE MRNA]</scope>
    <source>
        <strain>cv. Columbia</strain>
    </source>
</reference>
<reference key="5">
    <citation type="submission" date="2006-07" db="EMBL/GenBank/DDBJ databases">
        <title>Large-scale analysis of RIKEN Arabidopsis full-length (RAFL) cDNAs.</title>
        <authorList>
            <person name="Totoki Y."/>
            <person name="Seki M."/>
            <person name="Ishida J."/>
            <person name="Nakajima M."/>
            <person name="Enju A."/>
            <person name="Kamiya A."/>
            <person name="Narusaka M."/>
            <person name="Shin-i T."/>
            <person name="Nakagawa M."/>
            <person name="Sakamoto N."/>
            <person name="Oishi K."/>
            <person name="Kohara Y."/>
            <person name="Kobayashi M."/>
            <person name="Toyoda A."/>
            <person name="Sakaki Y."/>
            <person name="Sakurai T."/>
            <person name="Iida K."/>
            <person name="Akiyama K."/>
            <person name="Satou M."/>
            <person name="Toyoda T."/>
            <person name="Konagaya A."/>
            <person name="Carninci P."/>
            <person name="Kawai J."/>
            <person name="Hayashizaki Y."/>
            <person name="Shinozaki K."/>
        </authorList>
    </citation>
    <scope>NUCLEOTIDE SEQUENCE [LARGE SCALE MRNA]</scope>
    <source>
        <strain>cv. Columbia</strain>
    </source>
</reference>
<reference key="6">
    <citation type="journal article" date="2008" name="Plant Cell Physiol.">
        <title>Antagonistic jacalin-related lectins regulate the size of ER body-type beta-glucosidase complexes in Arabidopsis thaliana.</title>
        <authorList>
            <person name="Nagano A.J."/>
            <person name="Fukao Y."/>
            <person name="Fujiwara M."/>
            <person name="Nishimura M."/>
            <person name="Hara-Nishimura I."/>
        </authorList>
    </citation>
    <scope>GENE FAMILY</scope>
    <scope>NOMENCLATURE</scope>
</reference>
<reference key="7">
    <citation type="journal article" date="2009" name="Plant Physiol.">
        <title>The genetic basis of constitutive and herbivore-induced ESP-independent nitrile formation in Arabidopsis.</title>
        <authorList>
            <person name="Burow M."/>
            <person name="Losansky A."/>
            <person name="Muller R."/>
            <person name="Plock A."/>
            <person name="Kliebenstein D.J."/>
            <person name="Wittstock U."/>
        </authorList>
    </citation>
    <scope>FUNCTION</scope>
    <scope>DISRUPTION PHENOTYPE</scope>
    <scope>CATALYTIC ACTIVITY</scope>
</reference>
<reference key="8">
    <citation type="journal article" date="2016" name="Front. Plant Sci.">
        <title>NSP-dependent simple nitrile formation dominates upon breakdown of major aliphatic glucosinolates in roots, seeds, and seedlings of Arabidopsis thaliana Columbia-0.</title>
        <authorList>
            <person name="Wittstock U."/>
            <person name="Meier K."/>
            <person name="Doerr F."/>
            <person name="Ravindran B.M."/>
        </authorList>
    </citation>
    <scope>FUNCTION</scope>
    <scope>TISSUE SPECIFICITY</scope>
    <source>
        <strain>cv. Columbia</strain>
    </source>
</reference>
<reference key="9">
    <citation type="journal article" date="2019" name="Front. Plant Sci.">
        <title>Glucosinolate content in dormant and germinating Arabidopsis thaliana seeds is affected by non-functional alleles of classical myrosinase and nitrile-specifier protein genes.</title>
        <authorList>
            <person name="Meier K."/>
            <person name="Ehbrecht M.D."/>
            <person name="Wittstock U."/>
        </authorList>
    </citation>
    <scope>TISSUE SPECIFICITY</scope>
    <scope>DEVELOPMENTAL STAGE</scope>
    <source>
        <strain>cv. Columbia</strain>
    </source>
</reference>